<name>MRAY_BORBZ</name>
<reference key="1">
    <citation type="journal article" date="2011" name="J. Bacteriol.">
        <title>Whole-genome sequences of thirteen isolates of Borrelia burgdorferi.</title>
        <authorList>
            <person name="Schutzer S.E."/>
            <person name="Fraser-Liggett C.M."/>
            <person name="Casjens S.R."/>
            <person name="Qiu W.G."/>
            <person name="Dunn J.J."/>
            <person name="Mongodin E.F."/>
            <person name="Luft B.J."/>
        </authorList>
    </citation>
    <scope>NUCLEOTIDE SEQUENCE [LARGE SCALE GENOMIC DNA]</scope>
    <source>
        <strain>ZS7</strain>
    </source>
</reference>
<dbReference type="EC" id="2.7.8.13" evidence="1"/>
<dbReference type="EMBL" id="CP001205">
    <property type="protein sequence ID" value="ACK74886.1"/>
    <property type="molecule type" value="Genomic_DNA"/>
</dbReference>
<dbReference type="RefSeq" id="WP_002556902.1">
    <property type="nucleotide sequence ID" value="NC_011728.1"/>
</dbReference>
<dbReference type="SMR" id="B7J1N1"/>
<dbReference type="GeneID" id="56567734"/>
<dbReference type="KEGG" id="bbz:BbuZS7_0309"/>
<dbReference type="HOGENOM" id="CLU_023982_0_0_12"/>
<dbReference type="UniPathway" id="UPA00219"/>
<dbReference type="Proteomes" id="UP000006901">
    <property type="component" value="Chromosome"/>
</dbReference>
<dbReference type="GO" id="GO:0005886">
    <property type="term" value="C:plasma membrane"/>
    <property type="evidence" value="ECO:0007669"/>
    <property type="project" value="UniProtKB-SubCell"/>
</dbReference>
<dbReference type="GO" id="GO:0046872">
    <property type="term" value="F:metal ion binding"/>
    <property type="evidence" value="ECO:0007669"/>
    <property type="project" value="UniProtKB-KW"/>
</dbReference>
<dbReference type="GO" id="GO:0008963">
    <property type="term" value="F:phospho-N-acetylmuramoyl-pentapeptide-transferase activity"/>
    <property type="evidence" value="ECO:0007669"/>
    <property type="project" value="UniProtKB-UniRule"/>
</dbReference>
<dbReference type="GO" id="GO:0051992">
    <property type="term" value="F:UDP-N-acetylmuramoyl-L-alanyl-D-glutamyl-meso-2,6-diaminopimelyl-D-alanyl-D-alanine:undecaprenyl-phosphate transferase activity"/>
    <property type="evidence" value="ECO:0007669"/>
    <property type="project" value="RHEA"/>
</dbReference>
<dbReference type="GO" id="GO:0051301">
    <property type="term" value="P:cell division"/>
    <property type="evidence" value="ECO:0007669"/>
    <property type="project" value="UniProtKB-KW"/>
</dbReference>
<dbReference type="GO" id="GO:0071555">
    <property type="term" value="P:cell wall organization"/>
    <property type="evidence" value="ECO:0007669"/>
    <property type="project" value="UniProtKB-KW"/>
</dbReference>
<dbReference type="GO" id="GO:0009252">
    <property type="term" value="P:peptidoglycan biosynthetic process"/>
    <property type="evidence" value="ECO:0007669"/>
    <property type="project" value="UniProtKB-UniRule"/>
</dbReference>
<dbReference type="GO" id="GO:0008360">
    <property type="term" value="P:regulation of cell shape"/>
    <property type="evidence" value="ECO:0007669"/>
    <property type="project" value="UniProtKB-KW"/>
</dbReference>
<dbReference type="CDD" id="cd06852">
    <property type="entry name" value="GT_MraY"/>
    <property type="match status" value="1"/>
</dbReference>
<dbReference type="HAMAP" id="MF_00038">
    <property type="entry name" value="MraY"/>
    <property type="match status" value="1"/>
</dbReference>
<dbReference type="InterPro" id="IPR000715">
    <property type="entry name" value="Glycosyl_transferase_4"/>
</dbReference>
<dbReference type="InterPro" id="IPR003524">
    <property type="entry name" value="PNAcMuramoyl-5peptid_Trfase"/>
</dbReference>
<dbReference type="InterPro" id="IPR018480">
    <property type="entry name" value="PNAcMuramoyl-5peptid_Trfase_CS"/>
</dbReference>
<dbReference type="NCBIfam" id="TIGR00445">
    <property type="entry name" value="mraY"/>
    <property type="match status" value="1"/>
</dbReference>
<dbReference type="PANTHER" id="PTHR22926">
    <property type="entry name" value="PHOSPHO-N-ACETYLMURAMOYL-PENTAPEPTIDE-TRANSFERASE"/>
    <property type="match status" value="1"/>
</dbReference>
<dbReference type="PANTHER" id="PTHR22926:SF5">
    <property type="entry name" value="PHOSPHO-N-ACETYLMURAMOYL-PENTAPEPTIDE-TRANSFERASE HOMOLOG"/>
    <property type="match status" value="1"/>
</dbReference>
<dbReference type="Pfam" id="PF00953">
    <property type="entry name" value="Glycos_transf_4"/>
    <property type="match status" value="1"/>
</dbReference>
<dbReference type="Pfam" id="PF10555">
    <property type="entry name" value="MraY_sig1"/>
    <property type="match status" value="1"/>
</dbReference>
<dbReference type="PROSITE" id="PS01347">
    <property type="entry name" value="MRAY_1"/>
    <property type="match status" value="1"/>
</dbReference>
<dbReference type="PROSITE" id="PS01348">
    <property type="entry name" value="MRAY_2"/>
    <property type="match status" value="1"/>
</dbReference>
<keyword id="KW-0131">Cell cycle</keyword>
<keyword id="KW-0132">Cell division</keyword>
<keyword id="KW-0997">Cell inner membrane</keyword>
<keyword id="KW-1003">Cell membrane</keyword>
<keyword id="KW-0133">Cell shape</keyword>
<keyword id="KW-0961">Cell wall biogenesis/degradation</keyword>
<keyword id="KW-0460">Magnesium</keyword>
<keyword id="KW-0472">Membrane</keyword>
<keyword id="KW-0479">Metal-binding</keyword>
<keyword id="KW-0573">Peptidoglycan synthesis</keyword>
<keyword id="KW-0808">Transferase</keyword>
<keyword id="KW-0812">Transmembrane</keyword>
<keyword id="KW-1133">Transmembrane helix</keyword>
<proteinExistence type="inferred from homology"/>
<evidence type="ECO:0000255" key="1">
    <source>
        <dbReference type="HAMAP-Rule" id="MF_00038"/>
    </source>
</evidence>
<protein>
    <recommendedName>
        <fullName evidence="1">Phospho-N-acetylmuramoyl-pentapeptide-transferase</fullName>
        <ecNumber evidence="1">2.7.8.13</ecNumber>
    </recommendedName>
    <alternativeName>
        <fullName evidence="1">UDP-MurNAc-pentapeptide phosphotransferase</fullName>
    </alternativeName>
</protein>
<organism>
    <name type="scientific">Borreliella burgdorferi (strain ZS7)</name>
    <name type="common">Borrelia burgdorferi</name>
    <dbReference type="NCBI Taxonomy" id="445985"/>
    <lineage>
        <taxon>Bacteria</taxon>
        <taxon>Pseudomonadati</taxon>
        <taxon>Spirochaetota</taxon>
        <taxon>Spirochaetia</taxon>
        <taxon>Spirochaetales</taxon>
        <taxon>Borreliaceae</taxon>
        <taxon>Borreliella</taxon>
    </lineage>
</organism>
<accession>B7J1N1</accession>
<gene>
    <name evidence="1" type="primary">mraY</name>
    <name type="ordered locus">BbuZS7_0309</name>
</gene>
<comment type="function">
    <text evidence="1">Catalyzes the initial step of the lipid cycle reactions in the biosynthesis of the cell wall peptidoglycan: transfers peptidoglycan precursor phospho-MurNAc-pentapeptide from UDP-MurNAc-pentapeptide onto the lipid carrier undecaprenyl phosphate, yielding undecaprenyl-pyrophosphoryl-MurNAc-pentapeptide, known as lipid I.</text>
</comment>
<comment type="catalytic activity">
    <reaction evidence="1">
        <text>UDP-N-acetyl-alpha-D-muramoyl-L-alanyl-gamma-D-glutamyl-meso-2,6-diaminopimeloyl-D-alanyl-D-alanine + di-trans,octa-cis-undecaprenyl phosphate = di-trans,octa-cis-undecaprenyl diphospho-N-acetyl-alpha-D-muramoyl-L-alanyl-D-glutamyl-meso-2,6-diaminopimeloyl-D-alanyl-D-alanine + UMP</text>
        <dbReference type="Rhea" id="RHEA:28386"/>
        <dbReference type="ChEBI" id="CHEBI:57865"/>
        <dbReference type="ChEBI" id="CHEBI:60392"/>
        <dbReference type="ChEBI" id="CHEBI:61386"/>
        <dbReference type="ChEBI" id="CHEBI:61387"/>
        <dbReference type="EC" id="2.7.8.13"/>
    </reaction>
</comment>
<comment type="cofactor">
    <cofactor evidence="1">
        <name>Mg(2+)</name>
        <dbReference type="ChEBI" id="CHEBI:18420"/>
    </cofactor>
</comment>
<comment type="pathway">
    <text evidence="1">Cell wall biogenesis; peptidoglycan biosynthesis.</text>
</comment>
<comment type="subcellular location">
    <subcellularLocation>
        <location evidence="1">Cell inner membrane</location>
        <topology evidence="1">Multi-pass membrane protein</topology>
    </subcellularLocation>
</comment>
<comment type="similarity">
    <text evidence="1">Belongs to the glycosyltransferase 4 family. MraY subfamily.</text>
</comment>
<feature type="chain" id="PRO_1000116507" description="Phospho-N-acetylmuramoyl-pentapeptide-transferase">
    <location>
        <begin position="1"/>
        <end position="351"/>
    </location>
</feature>
<feature type="transmembrane region" description="Helical" evidence="1">
    <location>
        <begin position="17"/>
        <end position="37"/>
    </location>
</feature>
<feature type="transmembrane region" description="Helical" evidence="1">
    <location>
        <begin position="62"/>
        <end position="82"/>
    </location>
</feature>
<feature type="transmembrane region" description="Helical" evidence="1">
    <location>
        <begin position="85"/>
        <end position="105"/>
    </location>
</feature>
<feature type="transmembrane region" description="Helical" evidence="1">
    <location>
        <begin position="130"/>
        <end position="150"/>
    </location>
</feature>
<feature type="transmembrane region" description="Helical" evidence="1">
    <location>
        <begin position="158"/>
        <end position="178"/>
    </location>
</feature>
<feature type="transmembrane region" description="Helical" evidence="1">
    <location>
        <begin position="190"/>
        <end position="210"/>
    </location>
</feature>
<feature type="transmembrane region" description="Helical" evidence="1">
    <location>
        <begin position="230"/>
        <end position="250"/>
    </location>
</feature>
<feature type="transmembrane region" description="Helical" evidence="1">
    <location>
        <begin position="254"/>
        <end position="274"/>
    </location>
</feature>
<feature type="transmembrane region" description="Helical" evidence="1">
    <location>
        <begin position="279"/>
        <end position="299"/>
    </location>
</feature>
<feature type="transmembrane region" description="Helical" evidence="1">
    <location>
        <begin position="328"/>
        <end position="348"/>
    </location>
</feature>
<sequence>MFYLLGLRLLKYITFRMAYATIFAFLLSLIVGPYIILKLKKLRADQILREDGPKRHLSEKAGIPTMGGILIFFCVFISLVFWSNILNVYFLIMVFVMLGFAFLGFIDDFLKIKKKTSDGLKARFKIYGQIIFSFFSVGILYYFGGEHVSVIYFPFIKSFQIDLGLFYIPFGMFILISASNSFNLTDGLDGLAIGLSIVITGALIIIAYLTSRADFAAYLHIPNIKGSEELVIFLGALLGGSFGFLWFNAYPAKIMMGDTGSLALGAILGMAALILKSEILFSILAGVFIIETMSVIIQVLVYKKTKKRVFKMAPLHHHFEELGWSEMQVVIRFWIIGLIFAIIALSTIKIR</sequence>